<feature type="signal peptide" evidence="1">
    <location>
        <begin position="1"/>
        <end position="20"/>
    </location>
</feature>
<feature type="chain" id="PRO_0000312138" description="Ponticulin-like protein C3">
    <location>
        <begin position="21"/>
        <end position="118"/>
    </location>
</feature>
<feature type="propeptide" id="PRO_0000312139" description="Removed in mature form" evidence="1">
    <location>
        <begin position="119"/>
        <end position="147"/>
    </location>
</feature>
<feature type="lipid moiety-binding region" description="GPI-like-anchor amidated asparagine" evidence="1">
    <location>
        <position position="118"/>
    </location>
</feature>
<feature type="glycosylation site" description="N-linked (GlcNAc...) asparagine" evidence="1">
    <location>
        <position position="118"/>
    </location>
</feature>
<comment type="subcellular location">
    <subcellularLocation>
        <location evidence="2">Cell membrane</location>
        <topology evidence="2">Lipid-anchor</topology>
        <topology evidence="2">GPI-anchor</topology>
    </subcellularLocation>
</comment>
<comment type="PTM">
    <text evidence="2">The GPI-like-anchor contains a phosphoceramide group, rather than a phosphatidyl group.</text>
</comment>
<comment type="similarity">
    <text evidence="2">Belongs to the ponticulin family.</text>
</comment>
<comment type="caution">
    <text evidence="2">The Dictyosteliida are known to produce a glycosylsphingolipidinositol anchor (GPI-like-anchor). It has not been established whether Dictyosteliida make a glycosylphosphatidylinositol anchor (GPI-anchor) also, and whether their GPI-like-anchor modifications can be interconverted with GPI-anchor modifications in a resculpting process. It has not been established that the GPI-like-anchor modification in Dictyosteliida utilizes the same sequence motif.</text>
</comment>
<comment type="caution">
    <text evidence="2">Different sequence motifs predict both the N-glycosylation modification and the GPI- or GPI-like anchor modification for Asn-118. While it is chemically possible for both modifications to occur, it is not known whether it is enzymatically possible.</text>
</comment>
<gene>
    <name type="primary">ponC3</name>
    <name type="ORF">DDB_G0286721</name>
</gene>
<proteinExistence type="inferred from homology"/>
<accession>Q54LC0</accession>
<name>PONC3_DICDI</name>
<keyword id="KW-1003">Cell membrane</keyword>
<keyword id="KW-0325">Glycoprotein</keyword>
<keyword id="KW-0336">GPI-anchor</keyword>
<keyword id="KW-0449">Lipoprotein</keyword>
<keyword id="KW-0472">Membrane</keyword>
<keyword id="KW-1185">Reference proteome</keyword>
<keyword id="KW-0732">Signal</keyword>
<sequence>MKFTKSLLLLIVAVFASSNAAETFSNFQVTNSDANSPCVTTPVELKVNTCQSACGSILNVLPVTGSTSKFTFNQFGAQDTKCAATPTSSNEFTCVDGKSKVAIGSTTYSVVCVPDKTNSSESDSSDSTRIGASFALFALALLSMLAL</sequence>
<evidence type="ECO:0000255" key="1"/>
<evidence type="ECO:0000305" key="2"/>
<dbReference type="EMBL" id="AAFI02000089">
    <property type="protein sequence ID" value="EAL64116.1"/>
    <property type="molecule type" value="Genomic_DNA"/>
</dbReference>
<dbReference type="RefSeq" id="XP_637641.1">
    <property type="nucleotide sequence ID" value="XM_632549.1"/>
</dbReference>
<dbReference type="FunCoup" id="Q54LC0">
    <property type="interactions" value="698"/>
</dbReference>
<dbReference type="STRING" id="44689.Q54LC0"/>
<dbReference type="GlyCosmos" id="Q54LC0">
    <property type="glycosylation" value="1 site, No reported glycans"/>
</dbReference>
<dbReference type="GlyGen" id="Q54LC0">
    <property type="glycosylation" value="2 sites"/>
</dbReference>
<dbReference type="PaxDb" id="44689-DDB0232288"/>
<dbReference type="EnsemblProtists" id="EAL64116">
    <property type="protein sequence ID" value="EAL64116"/>
    <property type="gene ID" value="DDB_G0286721"/>
</dbReference>
<dbReference type="GeneID" id="8625782"/>
<dbReference type="KEGG" id="ddi:DDB_G0286721"/>
<dbReference type="dictyBase" id="DDB_G0286721">
    <property type="gene designation" value="ponC3"/>
</dbReference>
<dbReference type="VEuPathDB" id="AmoebaDB:DDB_G0286721"/>
<dbReference type="HOGENOM" id="CLU_1771535_0_0_1"/>
<dbReference type="InParanoid" id="Q54LC0"/>
<dbReference type="PhylomeDB" id="Q54LC0"/>
<dbReference type="PRO" id="PR:Q54LC0"/>
<dbReference type="Proteomes" id="UP000002195">
    <property type="component" value="Chromosome 4"/>
</dbReference>
<dbReference type="GO" id="GO:0042599">
    <property type="term" value="C:lamellar body"/>
    <property type="evidence" value="ECO:0007005"/>
    <property type="project" value="dictyBase"/>
</dbReference>
<dbReference type="GO" id="GO:0016020">
    <property type="term" value="C:membrane"/>
    <property type="evidence" value="ECO:0000250"/>
    <property type="project" value="dictyBase"/>
</dbReference>
<dbReference type="GO" id="GO:0005886">
    <property type="term" value="C:plasma membrane"/>
    <property type="evidence" value="ECO:0007669"/>
    <property type="project" value="UniProtKB-SubCell"/>
</dbReference>
<dbReference type="GO" id="GO:0098552">
    <property type="term" value="C:side of membrane"/>
    <property type="evidence" value="ECO:0007669"/>
    <property type="project" value="UniProtKB-KW"/>
</dbReference>
<dbReference type="GO" id="GO:0051015">
    <property type="term" value="F:actin filament binding"/>
    <property type="evidence" value="ECO:0000250"/>
    <property type="project" value="dictyBase"/>
</dbReference>
<protein>
    <recommendedName>
        <fullName>Ponticulin-like protein C3</fullName>
    </recommendedName>
</protein>
<reference key="1">
    <citation type="journal article" date="2005" name="Nature">
        <title>The genome of the social amoeba Dictyostelium discoideum.</title>
        <authorList>
            <person name="Eichinger L."/>
            <person name="Pachebat J.A."/>
            <person name="Gloeckner G."/>
            <person name="Rajandream M.A."/>
            <person name="Sucgang R."/>
            <person name="Berriman M."/>
            <person name="Song J."/>
            <person name="Olsen R."/>
            <person name="Szafranski K."/>
            <person name="Xu Q."/>
            <person name="Tunggal B."/>
            <person name="Kummerfeld S."/>
            <person name="Madera M."/>
            <person name="Konfortov B.A."/>
            <person name="Rivero F."/>
            <person name="Bankier A.T."/>
            <person name="Lehmann R."/>
            <person name="Hamlin N."/>
            <person name="Davies R."/>
            <person name="Gaudet P."/>
            <person name="Fey P."/>
            <person name="Pilcher K."/>
            <person name="Chen G."/>
            <person name="Saunders D."/>
            <person name="Sodergren E.J."/>
            <person name="Davis P."/>
            <person name="Kerhornou A."/>
            <person name="Nie X."/>
            <person name="Hall N."/>
            <person name="Anjard C."/>
            <person name="Hemphill L."/>
            <person name="Bason N."/>
            <person name="Farbrother P."/>
            <person name="Desany B."/>
            <person name="Just E."/>
            <person name="Morio T."/>
            <person name="Rost R."/>
            <person name="Churcher C.M."/>
            <person name="Cooper J."/>
            <person name="Haydock S."/>
            <person name="van Driessche N."/>
            <person name="Cronin A."/>
            <person name="Goodhead I."/>
            <person name="Muzny D.M."/>
            <person name="Mourier T."/>
            <person name="Pain A."/>
            <person name="Lu M."/>
            <person name="Harper D."/>
            <person name="Lindsay R."/>
            <person name="Hauser H."/>
            <person name="James K.D."/>
            <person name="Quiles M."/>
            <person name="Madan Babu M."/>
            <person name="Saito T."/>
            <person name="Buchrieser C."/>
            <person name="Wardroper A."/>
            <person name="Felder M."/>
            <person name="Thangavelu M."/>
            <person name="Johnson D."/>
            <person name="Knights A."/>
            <person name="Loulseged H."/>
            <person name="Mungall K.L."/>
            <person name="Oliver K."/>
            <person name="Price C."/>
            <person name="Quail M.A."/>
            <person name="Urushihara H."/>
            <person name="Hernandez J."/>
            <person name="Rabbinowitsch E."/>
            <person name="Steffen D."/>
            <person name="Sanders M."/>
            <person name="Ma J."/>
            <person name="Kohara Y."/>
            <person name="Sharp S."/>
            <person name="Simmonds M.N."/>
            <person name="Spiegler S."/>
            <person name="Tivey A."/>
            <person name="Sugano S."/>
            <person name="White B."/>
            <person name="Walker D."/>
            <person name="Woodward J.R."/>
            <person name="Winckler T."/>
            <person name="Tanaka Y."/>
            <person name="Shaulsky G."/>
            <person name="Schleicher M."/>
            <person name="Weinstock G.M."/>
            <person name="Rosenthal A."/>
            <person name="Cox E.C."/>
            <person name="Chisholm R.L."/>
            <person name="Gibbs R.A."/>
            <person name="Loomis W.F."/>
            <person name="Platzer M."/>
            <person name="Kay R.R."/>
            <person name="Williams J.G."/>
            <person name="Dear P.H."/>
            <person name="Noegel A.A."/>
            <person name="Barrell B.G."/>
            <person name="Kuspa A."/>
        </authorList>
    </citation>
    <scope>NUCLEOTIDE SEQUENCE [LARGE SCALE GENOMIC DNA]</scope>
    <source>
        <strain>AX4</strain>
    </source>
</reference>
<reference key="2">
    <citation type="journal article" date="2008" name="Langmuir">
        <title>Minimal F-actin cytoskeletal system for planar supported phospholipid bilayers.</title>
        <authorList>
            <person name="Barfoot R.J."/>
            <person name="Sheikh K.H."/>
            <person name="Johnson B.R."/>
            <person name="Colyer J."/>
            <person name="Miles R.E."/>
            <person name="Jeuken L.J."/>
            <person name="Bushby R.J."/>
            <person name="Evans S.D."/>
        </authorList>
    </citation>
    <scope>FUNCTION</scope>
</reference>
<organism>
    <name type="scientific">Dictyostelium discoideum</name>
    <name type="common">Social amoeba</name>
    <dbReference type="NCBI Taxonomy" id="44689"/>
    <lineage>
        <taxon>Eukaryota</taxon>
        <taxon>Amoebozoa</taxon>
        <taxon>Evosea</taxon>
        <taxon>Eumycetozoa</taxon>
        <taxon>Dictyostelia</taxon>
        <taxon>Dictyosteliales</taxon>
        <taxon>Dictyosteliaceae</taxon>
        <taxon>Dictyostelium</taxon>
    </lineage>
</organism>